<dbReference type="EC" id="6.3.4.2" evidence="1"/>
<dbReference type="EMBL" id="CP000241">
    <property type="protein sequence ID" value="ABF84411.1"/>
    <property type="molecule type" value="Genomic_DNA"/>
</dbReference>
<dbReference type="RefSeq" id="WP_000373211.1">
    <property type="nucleotide sequence ID" value="NC_008086.1"/>
</dbReference>
<dbReference type="SMR" id="Q1CUG1"/>
<dbReference type="MEROPS" id="C26.964"/>
<dbReference type="KEGG" id="hpa:HPAG1_0344"/>
<dbReference type="HOGENOM" id="CLU_011675_5_0_7"/>
<dbReference type="UniPathway" id="UPA00159">
    <property type="reaction ID" value="UER00277"/>
</dbReference>
<dbReference type="GO" id="GO:0005829">
    <property type="term" value="C:cytosol"/>
    <property type="evidence" value="ECO:0007669"/>
    <property type="project" value="TreeGrafter"/>
</dbReference>
<dbReference type="GO" id="GO:0005524">
    <property type="term" value="F:ATP binding"/>
    <property type="evidence" value="ECO:0007669"/>
    <property type="project" value="UniProtKB-KW"/>
</dbReference>
<dbReference type="GO" id="GO:0003883">
    <property type="term" value="F:CTP synthase activity"/>
    <property type="evidence" value="ECO:0007669"/>
    <property type="project" value="UniProtKB-UniRule"/>
</dbReference>
<dbReference type="GO" id="GO:0004359">
    <property type="term" value="F:glutaminase activity"/>
    <property type="evidence" value="ECO:0007669"/>
    <property type="project" value="RHEA"/>
</dbReference>
<dbReference type="GO" id="GO:0042802">
    <property type="term" value="F:identical protein binding"/>
    <property type="evidence" value="ECO:0007669"/>
    <property type="project" value="TreeGrafter"/>
</dbReference>
<dbReference type="GO" id="GO:0046872">
    <property type="term" value="F:metal ion binding"/>
    <property type="evidence" value="ECO:0007669"/>
    <property type="project" value="UniProtKB-KW"/>
</dbReference>
<dbReference type="GO" id="GO:0044210">
    <property type="term" value="P:'de novo' CTP biosynthetic process"/>
    <property type="evidence" value="ECO:0007669"/>
    <property type="project" value="UniProtKB-UniRule"/>
</dbReference>
<dbReference type="GO" id="GO:0019856">
    <property type="term" value="P:pyrimidine nucleobase biosynthetic process"/>
    <property type="evidence" value="ECO:0007669"/>
    <property type="project" value="TreeGrafter"/>
</dbReference>
<dbReference type="CDD" id="cd03113">
    <property type="entry name" value="CTPS_N"/>
    <property type="match status" value="1"/>
</dbReference>
<dbReference type="CDD" id="cd01746">
    <property type="entry name" value="GATase1_CTP_Synthase"/>
    <property type="match status" value="1"/>
</dbReference>
<dbReference type="FunFam" id="3.40.50.300:FF:000009">
    <property type="entry name" value="CTP synthase"/>
    <property type="match status" value="1"/>
</dbReference>
<dbReference type="FunFam" id="3.40.50.880:FF:000002">
    <property type="entry name" value="CTP synthase"/>
    <property type="match status" value="1"/>
</dbReference>
<dbReference type="Gene3D" id="3.40.50.880">
    <property type="match status" value="1"/>
</dbReference>
<dbReference type="Gene3D" id="3.40.50.300">
    <property type="entry name" value="P-loop containing nucleotide triphosphate hydrolases"/>
    <property type="match status" value="1"/>
</dbReference>
<dbReference type="HAMAP" id="MF_01227">
    <property type="entry name" value="PyrG"/>
    <property type="match status" value="1"/>
</dbReference>
<dbReference type="InterPro" id="IPR029062">
    <property type="entry name" value="Class_I_gatase-like"/>
</dbReference>
<dbReference type="InterPro" id="IPR004468">
    <property type="entry name" value="CTP_synthase"/>
</dbReference>
<dbReference type="InterPro" id="IPR017456">
    <property type="entry name" value="CTP_synthase_N"/>
</dbReference>
<dbReference type="InterPro" id="IPR017926">
    <property type="entry name" value="GATASE"/>
</dbReference>
<dbReference type="InterPro" id="IPR033828">
    <property type="entry name" value="GATase1_CTP_Synthase"/>
</dbReference>
<dbReference type="InterPro" id="IPR027417">
    <property type="entry name" value="P-loop_NTPase"/>
</dbReference>
<dbReference type="NCBIfam" id="NF003792">
    <property type="entry name" value="PRK05380.1"/>
    <property type="match status" value="1"/>
</dbReference>
<dbReference type="NCBIfam" id="TIGR00337">
    <property type="entry name" value="PyrG"/>
    <property type="match status" value="1"/>
</dbReference>
<dbReference type="PANTHER" id="PTHR11550">
    <property type="entry name" value="CTP SYNTHASE"/>
    <property type="match status" value="1"/>
</dbReference>
<dbReference type="PANTHER" id="PTHR11550:SF0">
    <property type="entry name" value="CTP SYNTHASE-RELATED"/>
    <property type="match status" value="1"/>
</dbReference>
<dbReference type="Pfam" id="PF06418">
    <property type="entry name" value="CTP_synth_N"/>
    <property type="match status" value="1"/>
</dbReference>
<dbReference type="Pfam" id="PF00117">
    <property type="entry name" value="GATase"/>
    <property type="match status" value="1"/>
</dbReference>
<dbReference type="SUPFAM" id="SSF52317">
    <property type="entry name" value="Class I glutamine amidotransferase-like"/>
    <property type="match status" value="1"/>
</dbReference>
<dbReference type="SUPFAM" id="SSF52540">
    <property type="entry name" value="P-loop containing nucleoside triphosphate hydrolases"/>
    <property type="match status" value="1"/>
</dbReference>
<dbReference type="PROSITE" id="PS51273">
    <property type="entry name" value="GATASE_TYPE_1"/>
    <property type="match status" value="1"/>
</dbReference>
<evidence type="ECO:0000255" key="1">
    <source>
        <dbReference type="HAMAP-Rule" id="MF_01227"/>
    </source>
</evidence>
<keyword id="KW-0067">ATP-binding</keyword>
<keyword id="KW-0315">Glutamine amidotransferase</keyword>
<keyword id="KW-0436">Ligase</keyword>
<keyword id="KW-0460">Magnesium</keyword>
<keyword id="KW-0479">Metal-binding</keyword>
<keyword id="KW-0547">Nucleotide-binding</keyword>
<keyword id="KW-0665">Pyrimidine biosynthesis</keyword>
<gene>
    <name evidence="1" type="primary">pyrG</name>
    <name type="ordered locus">HPAG1_0344</name>
</gene>
<name>PYRG_HELPH</name>
<accession>Q1CUG1</accession>
<feature type="chain" id="PRO_0000266134" description="CTP synthase">
    <location>
        <begin position="1"/>
        <end position="538"/>
    </location>
</feature>
<feature type="domain" description="Glutamine amidotransferase type-1" evidence="1">
    <location>
        <begin position="292"/>
        <end position="538"/>
    </location>
</feature>
<feature type="region of interest" description="Amidoligase domain" evidence="1">
    <location>
        <begin position="1"/>
        <end position="267"/>
    </location>
</feature>
<feature type="active site" description="Nucleophile; for glutamine hydrolysis" evidence="1">
    <location>
        <position position="378"/>
    </location>
</feature>
<feature type="active site" evidence="1">
    <location>
        <position position="513"/>
    </location>
</feature>
<feature type="active site" evidence="1">
    <location>
        <position position="515"/>
    </location>
</feature>
<feature type="binding site" evidence="1">
    <location>
        <position position="15"/>
    </location>
    <ligand>
        <name>CTP</name>
        <dbReference type="ChEBI" id="CHEBI:37563"/>
        <note>allosteric inhibitor</note>
    </ligand>
</feature>
<feature type="binding site" evidence="1">
    <location>
        <position position="15"/>
    </location>
    <ligand>
        <name>UTP</name>
        <dbReference type="ChEBI" id="CHEBI:46398"/>
    </ligand>
</feature>
<feature type="binding site" evidence="1">
    <location>
        <begin position="16"/>
        <end position="21"/>
    </location>
    <ligand>
        <name>ATP</name>
        <dbReference type="ChEBI" id="CHEBI:30616"/>
    </ligand>
</feature>
<feature type="binding site" evidence="1">
    <location>
        <position position="73"/>
    </location>
    <ligand>
        <name>ATP</name>
        <dbReference type="ChEBI" id="CHEBI:30616"/>
    </ligand>
</feature>
<feature type="binding site" evidence="1">
    <location>
        <position position="73"/>
    </location>
    <ligand>
        <name>Mg(2+)</name>
        <dbReference type="ChEBI" id="CHEBI:18420"/>
    </ligand>
</feature>
<feature type="binding site" evidence="1">
    <location>
        <position position="141"/>
    </location>
    <ligand>
        <name>Mg(2+)</name>
        <dbReference type="ChEBI" id="CHEBI:18420"/>
    </ligand>
</feature>
<feature type="binding site" evidence="1">
    <location>
        <begin position="148"/>
        <end position="150"/>
    </location>
    <ligand>
        <name>CTP</name>
        <dbReference type="ChEBI" id="CHEBI:37563"/>
        <note>allosteric inhibitor</note>
    </ligand>
</feature>
<feature type="binding site" evidence="1">
    <location>
        <begin position="188"/>
        <end position="193"/>
    </location>
    <ligand>
        <name>CTP</name>
        <dbReference type="ChEBI" id="CHEBI:37563"/>
        <note>allosteric inhibitor</note>
    </ligand>
</feature>
<feature type="binding site" evidence="1">
    <location>
        <begin position="188"/>
        <end position="193"/>
    </location>
    <ligand>
        <name>UTP</name>
        <dbReference type="ChEBI" id="CHEBI:46398"/>
    </ligand>
</feature>
<feature type="binding site" evidence="1">
    <location>
        <position position="224"/>
    </location>
    <ligand>
        <name>CTP</name>
        <dbReference type="ChEBI" id="CHEBI:37563"/>
        <note>allosteric inhibitor</note>
    </ligand>
</feature>
<feature type="binding site" evidence="1">
    <location>
        <position position="224"/>
    </location>
    <ligand>
        <name>UTP</name>
        <dbReference type="ChEBI" id="CHEBI:46398"/>
    </ligand>
</feature>
<feature type="binding site" evidence="1">
    <location>
        <position position="351"/>
    </location>
    <ligand>
        <name>L-glutamine</name>
        <dbReference type="ChEBI" id="CHEBI:58359"/>
    </ligand>
</feature>
<feature type="binding site" evidence="1">
    <location>
        <begin position="379"/>
        <end position="382"/>
    </location>
    <ligand>
        <name>L-glutamine</name>
        <dbReference type="ChEBI" id="CHEBI:58359"/>
    </ligand>
</feature>
<feature type="binding site" evidence="1">
    <location>
        <position position="402"/>
    </location>
    <ligand>
        <name>L-glutamine</name>
        <dbReference type="ChEBI" id="CHEBI:58359"/>
    </ligand>
</feature>
<feature type="binding site" evidence="1">
    <location>
        <position position="469"/>
    </location>
    <ligand>
        <name>L-glutamine</name>
        <dbReference type="ChEBI" id="CHEBI:58359"/>
    </ligand>
</feature>
<proteinExistence type="inferred from homology"/>
<comment type="function">
    <text evidence="1">Catalyzes the ATP-dependent amination of UTP to CTP with either L-glutamine or ammonia as the source of nitrogen. Regulates intracellular CTP levels through interactions with the four ribonucleotide triphosphates.</text>
</comment>
<comment type="catalytic activity">
    <reaction evidence="1">
        <text>UTP + L-glutamine + ATP + H2O = CTP + L-glutamate + ADP + phosphate + 2 H(+)</text>
        <dbReference type="Rhea" id="RHEA:26426"/>
        <dbReference type="ChEBI" id="CHEBI:15377"/>
        <dbReference type="ChEBI" id="CHEBI:15378"/>
        <dbReference type="ChEBI" id="CHEBI:29985"/>
        <dbReference type="ChEBI" id="CHEBI:30616"/>
        <dbReference type="ChEBI" id="CHEBI:37563"/>
        <dbReference type="ChEBI" id="CHEBI:43474"/>
        <dbReference type="ChEBI" id="CHEBI:46398"/>
        <dbReference type="ChEBI" id="CHEBI:58359"/>
        <dbReference type="ChEBI" id="CHEBI:456216"/>
        <dbReference type="EC" id="6.3.4.2"/>
    </reaction>
</comment>
<comment type="catalytic activity">
    <reaction evidence="1">
        <text>L-glutamine + H2O = L-glutamate + NH4(+)</text>
        <dbReference type="Rhea" id="RHEA:15889"/>
        <dbReference type="ChEBI" id="CHEBI:15377"/>
        <dbReference type="ChEBI" id="CHEBI:28938"/>
        <dbReference type="ChEBI" id="CHEBI:29985"/>
        <dbReference type="ChEBI" id="CHEBI:58359"/>
    </reaction>
</comment>
<comment type="catalytic activity">
    <reaction evidence="1">
        <text>UTP + NH4(+) + ATP = CTP + ADP + phosphate + 2 H(+)</text>
        <dbReference type="Rhea" id="RHEA:16597"/>
        <dbReference type="ChEBI" id="CHEBI:15378"/>
        <dbReference type="ChEBI" id="CHEBI:28938"/>
        <dbReference type="ChEBI" id="CHEBI:30616"/>
        <dbReference type="ChEBI" id="CHEBI:37563"/>
        <dbReference type="ChEBI" id="CHEBI:43474"/>
        <dbReference type="ChEBI" id="CHEBI:46398"/>
        <dbReference type="ChEBI" id="CHEBI:456216"/>
    </reaction>
</comment>
<comment type="activity regulation">
    <text evidence="1">Allosterically activated by GTP, when glutamine is the substrate; GTP has no effect on the reaction when ammonia is the substrate. The allosteric effector GTP functions by stabilizing the protein conformation that binds the tetrahedral intermediate(s) formed during glutamine hydrolysis. Inhibited by the product CTP, via allosteric rather than competitive inhibition.</text>
</comment>
<comment type="pathway">
    <text evidence="1">Pyrimidine metabolism; CTP biosynthesis via de novo pathway; CTP from UDP: step 2/2.</text>
</comment>
<comment type="subunit">
    <text evidence="1">Homotetramer.</text>
</comment>
<comment type="miscellaneous">
    <text evidence="1">CTPSs have evolved a hybrid strategy for distinguishing between UTP and CTP. The overlapping regions of the product feedback inhibitory and substrate sites recognize a common feature in both compounds, the triphosphate moiety. To differentiate isosteric substrate and product pyrimidine rings, an additional pocket far from the expected kinase/ligase catalytic site, specifically recognizes the cytosine and ribose portions of the product inhibitor.</text>
</comment>
<comment type="similarity">
    <text evidence="1">Belongs to the CTP synthase family.</text>
</comment>
<organism>
    <name type="scientific">Helicobacter pylori (strain HPAG1)</name>
    <dbReference type="NCBI Taxonomy" id="357544"/>
    <lineage>
        <taxon>Bacteria</taxon>
        <taxon>Pseudomonadati</taxon>
        <taxon>Campylobacterota</taxon>
        <taxon>Epsilonproteobacteria</taxon>
        <taxon>Campylobacterales</taxon>
        <taxon>Helicobacteraceae</taxon>
        <taxon>Helicobacter</taxon>
    </lineage>
</organism>
<sequence length="538" mass="60543">MDRAKFIFVTGGVLSSLGKGISSSSIATLLQHCNYQVSILKIDPYINIDPGTMSPLEHGEVFVTSDGAETDLDIGHYERFLNRNLTRLNNFTTGQIFSSVIENERKGEYLGKTIQIVPHVTDEIKRRIKSAAKGLDFLIVEVGGTVGDMEGMFYLEAIRQLKLELGNEKVINVHVTLIPYIQTTNELKTKPTQHSVQELRRLGVTPQIILARSPKPLDKELKNKIALSCDVEQDSVIVATDTKSIYACPILFLQEGILTPIARRFNLNKLHPKMAAWNTLVEKIIAPKHKVKIGFVGKYLSLKESYKSLIEALIHAGAHLDAQVNIEWLDSENFNEKTDLEGVDAILVPGGFGERGIEGKICAIQRARLEKLPFLGICLGMQLAIVEFCRNVLGLKGANSTEFNQRCEYPVVYLIGDFMDQNHQKQVRTYNSPLGGTMRLGEYECEIMPNSLLEKAYKKPSIKERHRHRYEINPKYRQEWESKGLKVVGFGANHLIEAIELEDHPFFVGVQFHPEFTSRLQSPNPIILDFIKSALSKS</sequence>
<protein>
    <recommendedName>
        <fullName evidence="1">CTP synthase</fullName>
        <ecNumber evidence="1">6.3.4.2</ecNumber>
    </recommendedName>
    <alternativeName>
        <fullName evidence="1">Cytidine 5'-triphosphate synthase</fullName>
    </alternativeName>
    <alternativeName>
        <fullName evidence="1">Cytidine triphosphate synthetase</fullName>
        <shortName evidence="1">CTP synthetase</shortName>
        <shortName evidence="1">CTPS</shortName>
    </alternativeName>
    <alternativeName>
        <fullName evidence="1">UTP--ammonia ligase</fullName>
    </alternativeName>
</protein>
<reference key="1">
    <citation type="journal article" date="2006" name="Proc. Natl. Acad. Sci. U.S.A.">
        <title>The complete genome sequence of a chronic atrophic gastritis Helicobacter pylori strain: evolution during disease progression.</title>
        <authorList>
            <person name="Oh J.D."/>
            <person name="Kling-Baeckhed H."/>
            <person name="Giannakis M."/>
            <person name="Xu J."/>
            <person name="Fulton R.S."/>
            <person name="Fulton L.A."/>
            <person name="Cordum H.S."/>
            <person name="Wang C."/>
            <person name="Elliott G."/>
            <person name="Edwards J."/>
            <person name="Mardis E.R."/>
            <person name="Engstrand L.G."/>
            <person name="Gordon J.I."/>
        </authorList>
    </citation>
    <scope>NUCLEOTIDE SEQUENCE [LARGE SCALE GENOMIC DNA]</scope>
    <source>
        <strain>HPAG1</strain>
    </source>
</reference>